<organism>
    <name type="scientific">Botryotinia fuckeliana (strain B05.10)</name>
    <name type="common">Noble rot fungus</name>
    <name type="synonym">Botrytis cinerea</name>
    <dbReference type="NCBI Taxonomy" id="332648"/>
    <lineage>
        <taxon>Eukaryota</taxon>
        <taxon>Fungi</taxon>
        <taxon>Dikarya</taxon>
        <taxon>Ascomycota</taxon>
        <taxon>Pezizomycotina</taxon>
        <taxon>Leotiomycetes</taxon>
        <taxon>Helotiales</taxon>
        <taxon>Sclerotiniaceae</taxon>
        <taxon>Botrytis</taxon>
    </lineage>
</organism>
<keyword id="KW-0963">Cytoplasm</keyword>
<keyword id="KW-0378">Hydrolase</keyword>
<keyword id="KW-0662">Pyridine nucleotide biosynthesis</keyword>
<keyword id="KW-0663">Pyridoxal phosphate</keyword>
<keyword id="KW-1185">Reference proteome</keyword>
<sequence>MGSIAKEEQPSTKVEKPTFSSKANTLEFAQSLDAKDHMRRFRDQYIIPSKANIKTKKLAKPGLSDEPSIYFCGNSLGLQPKCVQEYLQAHLDTWSSIAVHGHFRDLEDSPLTQWQLLAEHAAKQCAPIVGAKASEVAIMGTLTTNLHLLMASFYTPTPEKSKIIMEWKAFPSDHYAIESQIRGHGYNPEEAMVMIAPDEGSYEISTEKILRTIDEHASTTALLLLPGIQYYTGQLFDIKTITAYAQSKGLTVGWDLAHAAGNVPLQLHDWNVDFAVWCTYKYMNAGPGSIAGAYVHERHGEVDYSEGEEKPKYRHRLMGWYGGDQSCRFLMNNKFRPSPGASGYQVSNPSVVDLTSLCAALSIFNQTSMAEISQKTLHLTAYLEHLLLSTNSSDSPAFRIITPSDPSARGTQLSVLLKPGRLETLSDMLEEAGIVADKRKPDVIRVAPVPLYNTYEDVWNFVQIFNKALEKCEEA</sequence>
<protein>
    <recommendedName>
        <fullName evidence="1">Kynureninase</fullName>
        <ecNumber evidence="1">3.7.1.3</ecNumber>
    </recommendedName>
    <alternativeName>
        <fullName evidence="1">Biosynthesis of nicotinic acid protein 5</fullName>
    </alternativeName>
    <alternativeName>
        <fullName evidence="1">L-kynurenine hydrolase</fullName>
    </alternativeName>
</protein>
<proteinExistence type="inferred from homology"/>
<dbReference type="EC" id="3.7.1.3" evidence="1"/>
<dbReference type="EMBL" id="CP009816">
    <property type="protein sequence ID" value="ATZ55518.1"/>
    <property type="molecule type" value="Genomic_DNA"/>
</dbReference>
<dbReference type="RefSeq" id="XP_001557886.1">
    <property type="nucleotide sequence ID" value="XM_001557836.1"/>
</dbReference>
<dbReference type="SMR" id="A6RSP5"/>
<dbReference type="EnsemblFungi" id="Bcin12g01070.1">
    <property type="protein sequence ID" value="Bcin12p01070.1"/>
    <property type="gene ID" value="Bcin12g01070"/>
</dbReference>
<dbReference type="GeneID" id="5438547"/>
<dbReference type="KEGG" id="bfu:BCIN_12g01070"/>
<dbReference type="VEuPathDB" id="FungiDB:Bcin12g01070"/>
<dbReference type="OMA" id="SHVAYRS"/>
<dbReference type="OrthoDB" id="5978656at2759"/>
<dbReference type="UniPathway" id="UPA00253">
    <property type="reaction ID" value="UER00329"/>
</dbReference>
<dbReference type="UniPathway" id="UPA00334">
    <property type="reaction ID" value="UER00455"/>
</dbReference>
<dbReference type="Proteomes" id="UP000001798">
    <property type="component" value="Chromosome bcin12"/>
</dbReference>
<dbReference type="GO" id="GO:0005737">
    <property type="term" value="C:cytoplasm"/>
    <property type="evidence" value="ECO:0007669"/>
    <property type="project" value="UniProtKB-SubCell"/>
</dbReference>
<dbReference type="GO" id="GO:0030429">
    <property type="term" value="F:kynureninase activity"/>
    <property type="evidence" value="ECO:0007669"/>
    <property type="project" value="UniProtKB-UniRule"/>
</dbReference>
<dbReference type="GO" id="GO:0030170">
    <property type="term" value="F:pyridoxal phosphate binding"/>
    <property type="evidence" value="ECO:0007669"/>
    <property type="project" value="UniProtKB-UniRule"/>
</dbReference>
<dbReference type="GO" id="GO:0034354">
    <property type="term" value="P:'de novo' NAD biosynthetic process from L-tryptophan"/>
    <property type="evidence" value="ECO:0007669"/>
    <property type="project" value="UniProtKB-UniRule"/>
</dbReference>
<dbReference type="GO" id="GO:0043420">
    <property type="term" value="P:anthranilate metabolic process"/>
    <property type="evidence" value="ECO:0007669"/>
    <property type="project" value="UniProtKB-UniRule"/>
</dbReference>
<dbReference type="GO" id="GO:0097053">
    <property type="term" value="P:L-kynurenine catabolic process"/>
    <property type="evidence" value="ECO:0007669"/>
    <property type="project" value="UniProtKB-UniRule"/>
</dbReference>
<dbReference type="GO" id="GO:0019441">
    <property type="term" value="P:L-tryptophan catabolic process to kynurenine"/>
    <property type="evidence" value="ECO:0007669"/>
    <property type="project" value="TreeGrafter"/>
</dbReference>
<dbReference type="GO" id="GO:0019805">
    <property type="term" value="P:quinolinate biosynthetic process"/>
    <property type="evidence" value="ECO:0007669"/>
    <property type="project" value="UniProtKB-UniRule"/>
</dbReference>
<dbReference type="FunFam" id="3.40.640.10:FF:000031">
    <property type="entry name" value="Kynureninase"/>
    <property type="match status" value="1"/>
</dbReference>
<dbReference type="Gene3D" id="3.90.1150.10">
    <property type="entry name" value="Aspartate Aminotransferase, domain 1"/>
    <property type="match status" value="1"/>
</dbReference>
<dbReference type="Gene3D" id="3.40.640.10">
    <property type="entry name" value="Type I PLP-dependent aspartate aminotransferase-like (Major domain)"/>
    <property type="match status" value="1"/>
</dbReference>
<dbReference type="HAMAP" id="MF_01970">
    <property type="entry name" value="Kynureninase"/>
    <property type="match status" value="1"/>
</dbReference>
<dbReference type="InterPro" id="IPR010111">
    <property type="entry name" value="Kynureninase"/>
</dbReference>
<dbReference type="InterPro" id="IPR015424">
    <property type="entry name" value="PyrdxlP-dep_Trfase"/>
</dbReference>
<dbReference type="InterPro" id="IPR015421">
    <property type="entry name" value="PyrdxlP-dep_Trfase_major"/>
</dbReference>
<dbReference type="InterPro" id="IPR015422">
    <property type="entry name" value="PyrdxlP-dep_Trfase_small"/>
</dbReference>
<dbReference type="NCBIfam" id="TIGR01814">
    <property type="entry name" value="kynureninase"/>
    <property type="match status" value="1"/>
</dbReference>
<dbReference type="PANTHER" id="PTHR14084">
    <property type="entry name" value="KYNURENINASE"/>
    <property type="match status" value="1"/>
</dbReference>
<dbReference type="PANTHER" id="PTHR14084:SF2">
    <property type="entry name" value="KYNURENINASE 2"/>
    <property type="match status" value="1"/>
</dbReference>
<dbReference type="Pfam" id="PF22580">
    <property type="entry name" value="KYNU_C"/>
    <property type="match status" value="1"/>
</dbReference>
<dbReference type="PIRSF" id="PIRSF038800">
    <property type="entry name" value="KYNU"/>
    <property type="match status" value="1"/>
</dbReference>
<dbReference type="SUPFAM" id="SSF53383">
    <property type="entry name" value="PLP-dependent transferases"/>
    <property type="match status" value="1"/>
</dbReference>
<comment type="function">
    <text evidence="1">Catalyzes the cleavage of L-kynurenine (L-Kyn) and L-3-hydroxykynurenine (L-3OHKyn) into anthranilic acid (AA) and 3-hydroxyanthranilic acid (3-OHAA), respectively.</text>
</comment>
<comment type="catalytic activity">
    <reaction evidence="1">
        <text>L-kynurenine + H2O = anthranilate + L-alanine + H(+)</text>
        <dbReference type="Rhea" id="RHEA:16813"/>
        <dbReference type="ChEBI" id="CHEBI:15377"/>
        <dbReference type="ChEBI" id="CHEBI:15378"/>
        <dbReference type="ChEBI" id="CHEBI:16567"/>
        <dbReference type="ChEBI" id="CHEBI:57959"/>
        <dbReference type="ChEBI" id="CHEBI:57972"/>
        <dbReference type="EC" id="3.7.1.3"/>
    </reaction>
</comment>
<comment type="catalytic activity">
    <reaction evidence="1">
        <text>3-hydroxy-L-kynurenine + H2O = 3-hydroxyanthranilate + L-alanine + H(+)</text>
        <dbReference type="Rhea" id="RHEA:25143"/>
        <dbReference type="ChEBI" id="CHEBI:15377"/>
        <dbReference type="ChEBI" id="CHEBI:15378"/>
        <dbReference type="ChEBI" id="CHEBI:36559"/>
        <dbReference type="ChEBI" id="CHEBI:57972"/>
        <dbReference type="ChEBI" id="CHEBI:58125"/>
        <dbReference type="EC" id="3.7.1.3"/>
    </reaction>
</comment>
<comment type="cofactor">
    <cofactor evidence="1">
        <name>pyridoxal 5'-phosphate</name>
        <dbReference type="ChEBI" id="CHEBI:597326"/>
    </cofactor>
</comment>
<comment type="pathway">
    <text evidence="1">Amino-acid degradation; L-kynurenine degradation; L-alanine and anthranilate from L-kynurenine: step 1/1.</text>
</comment>
<comment type="pathway">
    <text evidence="1">Cofactor biosynthesis; NAD(+) biosynthesis; quinolinate from L-kynurenine: step 2/3.</text>
</comment>
<comment type="subunit">
    <text evidence="1">Homodimer.</text>
</comment>
<comment type="subcellular location">
    <subcellularLocation>
        <location evidence="1">Cytoplasm</location>
    </subcellularLocation>
</comment>
<comment type="similarity">
    <text evidence="1">Belongs to the kynureninase family.</text>
</comment>
<gene>
    <name type="primary">bna5</name>
    <name type="ORF">BC1G_03468</name>
    <name type="ORF">BCIN_12g01070</name>
</gene>
<accession>A6RSP5</accession>
<accession>A0A384JYA6</accession>
<reference key="1">
    <citation type="journal article" date="2011" name="PLoS Genet.">
        <title>Genomic analysis of the necrotrophic fungal pathogens Sclerotinia sclerotiorum and Botrytis cinerea.</title>
        <authorList>
            <person name="Amselem J."/>
            <person name="Cuomo C.A."/>
            <person name="van Kan J.A.L."/>
            <person name="Viaud M."/>
            <person name="Benito E.P."/>
            <person name="Couloux A."/>
            <person name="Coutinho P.M."/>
            <person name="de Vries R.P."/>
            <person name="Dyer P.S."/>
            <person name="Fillinger S."/>
            <person name="Fournier E."/>
            <person name="Gout L."/>
            <person name="Hahn M."/>
            <person name="Kohn L."/>
            <person name="Lapalu N."/>
            <person name="Plummer K.M."/>
            <person name="Pradier J.-M."/>
            <person name="Quevillon E."/>
            <person name="Sharon A."/>
            <person name="Simon A."/>
            <person name="ten Have A."/>
            <person name="Tudzynski B."/>
            <person name="Tudzynski P."/>
            <person name="Wincker P."/>
            <person name="Andrew M."/>
            <person name="Anthouard V."/>
            <person name="Beever R.E."/>
            <person name="Beffa R."/>
            <person name="Benoit I."/>
            <person name="Bouzid O."/>
            <person name="Brault B."/>
            <person name="Chen Z."/>
            <person name="Choquer M."/>
            <person name="Collemare J."/>
            <person name="Cotton P."/>
            <person name="Danchin E.G."/>
            <person name="Da Silva C."/>
            <person name="Gautier A."/>
            <person name="Giraud C."/>
            <person name="Giraud T."/>
            <person name="Gonzalez C."/>
            <person name="Grossetete S."/>
            <person name="Gueldener U."/>
            <person name="Henrissat B."/>
            <person name="Howlett B.J."/>
            <person name="Kodira C."/>
            <person name="Kretschmer M."/>
            <person name="Lappartient A."/>
            <person name="Leroch M."/>
            <person name="Levis C."/>
            <person name="Mauceli E."/>
            <person name="Neuveglise C."/>
            <person name="Oeser B."/>
            <person name="Pearson M."/>
            <person name="Poulain J."/>
            <person name="Poussereau N."/>
            <person name="Quesneville H."/>
            <person name="Rascle C."/>
            <person name="Schumacher J."/>
            <person name="Segurens B."/>
            <person name="Sexton A."/>
            <person name="Silva E."/>
            <person name="Sirven C."/>
            <person name="Soanes D.M."/>
            <person name="Talbot N.J."/>
            <person name="Templeton M."/>
            <person name="Yandava C."/>
            <person name="Yarden O."/>
            <person name="Zeng Q."/>
            <person name="Rollins J.A."/>
            <person name="Lebrun M.-H."/>
            <person name="Dickman M."/>
        </authorList>
    </citation>
    <scope>NUCLEOTIDE SEQUENCE [LARGE SCALE GENOMIC DNA]</scope>
    <source>
        <strain>B05.10</strain>
    </source>
</reference>
<reference key="2">
    <citation type="journal article" date="2012" name="Eukaryot. Cell">
        <title>Genome update of Botrytis cinerea strains B05.10 and T4.</title>
        <authorList>
            <person name="Staats M."/>
            <person name="van Kan J.A.L."/>
        </authorList>
    </citation>
    <scope>NUCLEOTIDE SEQUENCE [LARGE SCALE GENOMIC DNA]</scope>
    <scope>GENOME REANNOTATION</scope>
    <source>
        <strain>B05.10</strain>
    </source>
</reference>
<reference key="3">
    <citation type="journal article" date="2017" name="Mol. Plant Pathol.">
        <title>A gapless genome sequence of the fungus Botrytis cinerea.</title>
        <authorList>
            <person name="van Kan J.A.L."/>
            <person name="Stassen J.H.M."/>
            <person name="Mosbach A."/>
            <person name="van der Lee T.A.J."/>
            <person name="Faino L."/>
            <person name="Farmer A.D."/>
            <person name="Papasotiriou D.G."/>
            <person name="Zhou S."/>
            <person name="Seidl M.F."/>
            <person name="Cottam E."/>
            <person name="Edel D."/>
            <person name="Hahn M."/>
            <person name="Schwartz D.C."/>
            <person name="Dietrich R.A."/>
            <person name="Widdison S."/>
            <person name="Scalliet G."/>
        </authorList>
    </citation>
    <scope>NUCLEOTIDE SEQUENCE [LARGE SCALE GENOMIC DNA]</scope>
    <scope>GENOME REANNOTATION</scope>
    <source>
        <strain>B05.10</strain>
    </source>
</reference>
<evidence type="ECO:0000255" key="1">
    <source>
        <dbReference type="HAMAP-Rule" id="MF_03017"/>
    </source>
</evidence>
<name>KYNU_BOTFB</name>
<feature type="chain" id="PRO_0000360867" description="Kynureninase">
    <location>
        <begin position="1"/>
        <end position="475"/>
    </location>
</feature>
<feature type="binding site" evidence="1">
    <location>
        <position position="142"/>
    </location>
    <ligand>
        <name>pyridoxal 5'-phosphate</name>
        <dbReference type="ChEBI" id="CHEBI:597326"/>
    </ligand>
</feature>
<feature type="binding site" evidence="1">
    <location>
        <position position="143"/>
    </location>
    <ligand>
        <name>pyridoxal 5'-phosphate</name>
        <dbReference type="ChEBI" id="CHEBI:597326"/>
    </ligand>
</feature>
<feature type="binding site" evidence="1">
    <location>
        <begin position="170"/>
        <end position="173"/>
    </location>
    <ligand>
        <name>pyridoxal 5'-phosphate</name>
        <dbReference type="ChEBI" id="CHEBI:597326"/>
    </ligand>
</feature>
<feature type="binding site" evidence="1">
    <location>
        <position position="255"/>
    </location>
    <ligand>
        <name>pyridoxal 5'-phosphate</name>
        <dbReference type="ChEBI" id="CHEBI:597326"/>
    </ligand>
</feature>
<feature type="binding site" evidence="1">
    <location>
        <position position="258"/>
    </location>
    <ligand>
        <name>pyridoxal 5'-phosphate</name>
        <dbReference type="ChEBI" id="CHEBI:597326"/>
    </ligand>
</feature>
<feature type="binding site" evidence="1">
    <location>
        <position position="280"/>
    </location>
    <ligand>
        <name>pyridoxal 5'-phosphate</name>
        <dbReference type="ChEBI" id="CHEBI:597326"/>
    </ligand>
</feature>
<feature type="binding site" evidence="1">
    <location>
        <position position="320"/>
    </location>
    <ligand>
        <name>pyridoxal 5'-phosphate</name>
        <dbReference type="ChEBI" id="CHEBI:597326"/>
    </ligand>
</feature>
<feature type="binding site" evidence="1">
    <location>
        <position position="348"/>
    </location>
    <ligand>
        <name>pyridoxal 5'-phosphate</name>
        <dbReference type="ChEBI" id="CHEBI:597326"/>
    </ligand>
</feature>
<feature type="modified residue" description="N6-(pyridoxal phosphate)lysine" evidence="1">
    <location>
        <position position="281"/>
    </location>
</feature>